<sequence>MTDKMGTDLTSFRGNLNGLYEAIKVQTALQKEAKTIKREQKKIKDEIDTFKTAILEDLKQRDQEGVEFKGLKITIHPKPKRVYFKKADKERLICEALRNCGIEDAQSKTKNVIDAISQIHTETEDTLKIIDSKKEKKVNKY</sequence>
<organism>
    <name type="scientific">Invertebrate iridescent virus 6</name>
    <name type="common">IIV-6</name>
    <name type="synonym">Chilo iridescent virus</name>
    <dbReference type="NCBI Taxonomy" id="176652"/>
    <lineage>
        <taxon>Viruses</taxon>
        <taxon>Varidnaviria</taxon>
        <taxon>Bamfordvirae</taxon>
        <taxon>Nucleocytoviricota</taxon>
        <taxon>Megaviricetes</taxon>
        <taxon>Pimascovirales</taxon>
        <taxon>Iridoviridae</taxon>
        <taxon>Betairidovirinae</taxon>
        <taxon>Iridovirus</taxon>
    </lineage>
</organism>
<evidence type="ECO:0000255" key="1"/>
<dbReference type="EMBL" id="AF303741">
    <property type="protein sequence ID" value="AAB94447.1"/>
    <property type="molecule type" value="Genomic_DNA"/>
</dbReference>
<dbReference type="PIR" id="T03073">
    <property type="entry name" value="T03073"/>
</dbReference>
<dbReference type="RefSeq" id="NP_149585.1">
    <property type="nucleotide sequence ID" value="NC_003038.1"/>
</dbReference>
<dbReference type="SMR" id="O55736"/>
<dbReference type="KEGG" id="vg:1733026"/>
<dbReference type="OrthoDB" id="37394at10239"/>
<dbReference type="Proteomes" id="UP000001359">
    <property type="component" value="Genome"/>
</dbReference>
<organismHost>
    <name type="scientific">Acheta domesticus</name>
    <name type="common">House cricket</name>
    <dbReference type="NCBI Taxonomy" id="6997"/>
</organismHost>
<organismHost>
    <name type="scientific">Chilo suppressalis</name>
    <name type="common">Asiatic rice borer moth</name>
    <dbReference type="NCBI Taxonomy" id="168631"/>
</organismHost>
<organismHost>
    <name type="scientific">Gryllus bimaculatus</name>
    <name type="common">Two-spotted cricket</name>
    <dbReference type="NCBI Taxonomy" id="6999"/>
</organismHost>
<organismHost>
    <name type="scientific">Gryllus campestris</name>
    <dbReference type="NCBI Taxonomy" id="58607"/>
</organismHost>
<organismHost>
    <name type="scientific">Spodoptera frugiperda</name>
    <name type="common">Fall armyworm</name>
    <dbReference type="NCBI Taxonomy" id="7108"/>
</organismHost>
<accession>O55736</accession>
<gene>
    <name type="ORF">IIV6-122R</name>
</gene>
<name>122R_IIV6</name>
<proteinExistence type="predicted"/>
<feature type="chain" id="PRO_0000377999" description="Uncharacterized protein 122R">
    <location>
        <begin position="1"/>
        <end position="141"/>
    </location>
</feature>
<feature type="coiled-coil region" evidence="1">
    <location>
        <begin position="24"/>
        <end position="52"/>
    </location>
</feature>
<protein>
    <recommendedName>
        <fullName>Uncharacterized protein 122R</fullName>
    </recommendedName>
</protein>
<keyword id="KW-0175">Coiled coil</keyword>
<keyword id="KW-1185">Reference proteome</keyword>
<reference key="1">
    <citation type="journal article" date="2001" name="Virology">
        <title>Analysis of the first complete DNA sequence of an invertebrate iridovirus: coding strategy of the genome of Chilo iridescent virus.</title>
        <authorList>
            <person name="Jakob N.J."/>
            <person name="Mueller K."/>
            <person name="Bahr U."/>
            <person name="Darai G."/>
        </authorList>
    </citation>
    <scope>NUCLEOTIDE SEQUENCE [LARGE SCALE GENOMIC DNA]</scope>
</reference>
<reference key="2">
    <citation type="journal article" date="2007" name="Virol. J.">
        <title>Comparative genomic analysis of the family Iridoviridae: re-annotating and defining the core set of iridovirus genes.</title>
        <authorList>
            <person name="Eaton H.E."/>
            <person name="Metcalf J."/>
            <person name="Penny E."/>
            <person name="Tcherepanov V."/>
            <person name="Upton C."/>
            <person name="Brunetti C.R."/>
        </authorList>
    </citation>
    <scope>GENOME REANNOTATION</scope>
</reference>